<name>QUEF_VIBVU</name>
<proteinExistence type="inferred from homology"/>
<organism>
    <name type="scientific">Vibrio vulnificus (strain CMCP6)</name>
    <dbReference type="NCBI Taxonomy" id="216895"/>
    <lineage>
        <taxon>Bacteria</taxon>
        <taxon>Pseudomonadati</taxon>
        <taxon>Pseudomonadota</taxon>
        <taxon>Gammaproteobacteria</taxon>
        <taxon>Vibrionales</taxon>
        <taxon>Vibrionaceae</taxon>
        <taxon>Vibrio</taxon>
    </lineage>
</organism>
<accession>Q8DFB8</accession>
<gene>
    <name evidence="1" type="primary">queF</name>
    <name type="ordered locus">VV1_0297</name>
</gene>
<dbReference type="EC" id="1.7.1.13" evidence="1"/>
<dbReference type="EMBL" id="AE016795">
    <property type="protein sequence ID" value="AAO08830.1"/>
    <property type="molecule type" value="Genomic_DNA"/>
</dbReference>
<dbReference type="RefSeq" id="WP_011078405.1">
    <property type="nucleotide sequence ID" value="NC_004459.3"/>
</dbReference>
<dbReference type="SMR" id="Q8DFB8"/>
<dbReference type="KEGG" id="vvu:VV1_0297"/>
<dbReference type="HOGENOM" id="CLU_054738_0_0_6"/>
<dbReference type="UniPathway" id="UPA00392"/>
<dbReference type="Proteomes" id="UP000002275">
    <property type="component" value="Chromosome 1"/>
</dbReference>
<dbReference type="GO" id="GO:0005737">
    <property type="term" value="C:cytoplasm"/>
    <property type="evidence" value="ECO:0007669"/>
    <property type="project" value="UniProtKB-SubCell"/>
</dbReference>
<dbReference type="GO" id="GO:0033739">
    <property type="term" value="F:preQ1 synthase activity"/>
    <property type="evidence" value="ECO:0007669"/>
    <property type="project" value="UniProtKB-UniRule"/>
</dbReference>
<dbReference type="GO" id="GO:0008616">
    <property type="term" value="P:queuosine biosynthetic process"/>
    <property type="evidence" value="ECO:0007669"/>
    <property type="project" value="UniProtKB-UniRule"/>
</dbReference>
<dbReference type="GO" id="GO:0006400">
    <property type="term" value="P:tRNA modification"/>
    <property type="evidence" value="ECO:0007669"/>
    <property type="project" value="UniProtKB-UniRule"/>
</dbReference>
<dbReference type="Gene3D" id="3.30.1130.10">
    <property type="match status" value="2"/>
</dbReference>
<dbReference type="HAMAP" id="MF_00817">
    <property type="entry name" value="QueF_type2"/>
    <property type="match status" value="1"/>
</dbReference>
<dbReference type="InterPro" id="IPR043133">
    <property type="entry name" value="GTP-CH-I_C/QueF"/>
</dbReference>
<dbReference type="InterPro" id="IPR050084">
    <property type="entry name" value="NADPH_dep_7-cyano-7-deazaG_red"/>
</dbReference>
<dbReference type="InterPro" id="IPR029500">
    <property type="entry name" value="QueF"/>
</dbReference>
<dbReference type="InterPro" id="IPR029139">
    <property type="entry name" value="QueF_N"/>
</dbReference>
<dbReference type="InterPro" id="IPR016428">
    <property type="entry name" value="QueF_type2"/>
</dbReference>
<dbReference type="NCBIfam" id="TIGR03138">
    <property type="entry name" value="QueF"/>
    <property type="match status" value="1"/>
</dbReference>
<dbReference type="PANTHER" id="PTHR34354">
    <property type="entry name" value="NADPH-DEPENDENT 7-CYANO-7-DEAZAGUANINE REDUCTASE"/>
    <property type="match status" value="1"/>
</dbReference>
<dbReference type="PANTHER" id="PTHR34354:SF1">
    <property type="entry name" value="NADPH-DEPENDENT 7-CYANO-7-DEAZAGUANINE REDUCTASE"/>
    <property type="match status" value="1"/>
</dbReference>
<dbReference type="Pfam" id="PF14489">
    <property type="entry name" value="QueF"/>
    <property type="match status" value="1"/>
</dbReference>
<dbReference type="Pfam" id="PF14819">
    <property type="entry name" value="QueF_N"/>
    <property type="match status" value="1"/>
</dbReference>
<dbReference type="PIRSF" id="PIRSF004750">
    <property type="entry name" value="Nitrile_oxidored_YqcD_prd"/>
    <property type="match status" value="1"/>
</dbReference>
<dbReference type="SUPFAM" id="SSF55620">
    <property type="entry name" value="Tetrahydrobiopterin biosynthesis enzymes-like"/>
    <property type="match status" value="1"/>
</dbReference>
<evidence type="ECO:0000255" key="1">
    <source>
        <dbReference type="HAMAP-Rule" id="MF_00817"/>
    </source>
</evidence>
<evidence type="ECO:0000256" key="2">
    <source>
        <dbReference type="SAM" id="MobiDB-lite"/>
    </source>
</evidence>
<comment type="function">
    <text evidence="1">Catalyzes the NADPH-dependent reduction of 7-cyano-7-deazaguanine (preQ0) to 7-aminomethyl-7-deazaguanine (preQ1).</text>
</comment>
<comment type="catalytic activity">
    <reaction evidence="1">
        <text>7-aminomethyl-7-carbaguanine + 2 NADP(+) = 7-cyano-7-deazaguanine + 2 NADPH + 3 H(+)</text>
        <dbReference type="Rhea" id="RHEA:13409"/>
        <dbReference type="ChEBI" id="CHEBI:15378"/>
        <dbReference type="ChEBI" id="CHEBI:45075"/>
        <dbReference type="ChEBI" id="CHEBI:57783"/>
        <dbReference type="ChEBI" id="CHEBI:58349"/>
        <dbReference type="ChEBI" id="CHEBI:58703"/>
        <dbReference type="EC" id="1.7.1.13"/>
    </reaction>
</comment>
<comment type="pathway">
    <text evidence="1">tRNA modification; tRNA-queuosine biosynthesis.</text>
</comment>
<comment type="subunit">
    <text evidence="1">Homodimer.</text>
</comment>
<comment type="subcellular location">
    <subcellularLocation>
        <location evidence="1">Cytoplasm</location>
    </subcellularLocation>
</comment>
<comment type="similarity">
    <text evidence="1">Belongs to the GTP cyclohydrolase I family. QueF type 2 subfamily.</text>
</comment>
<keyword id="KW-0963">Cytoplasm</keyword>
<keyword id="KW-0521">NADP</keyword>
<keyword id="KW-0560">Oxidoreductase</keyword>
<keyword id="KW-0671">Queuosine biosynthesis</keyword>
<sequence length="281" mass="32500">MSKYSDAKELAGLTLGKKTDYANQYDPSLLQPVPRSLNRDDLQLGDELPFMGHDIWTLYELSWLNSKGLPQVAVGEVYIPATSANLIESKSFKLYLNSYNQTRFDSWEEVRQRLITDLSHCAGEAVEVAVNSVTHYTQQPIVTMEGECIDEQDIDISSYDFDDRLLEGAAGEEWVTETLHSHLLKSNCLITNQPDWGSVEIRYQGHKIDREKLLRYLVSFREHNEFHEQCVERIFTDLMKYCQPESLTVFARYTRRGGLDINPYRSTEQAKPDHNHRMARQ</sequence>
<reference key="1">
    <citation type="submission" date="2002-12" db="EMBL/GenBank/DDBJ databases">
        <title>Complete genome sequence of Vibrio vulnificus CMCP6.</title>
        <authorList>
            <person name="Rhee J.H."/>
            <person name="Kim S.Y."/>
            <person name="Chung S.S."/>
            <person name="Kim J.J."/>
            <person name="Moon Y.H."/>
            <person name="Jeong H."/>
            <person name="Choy H.E."/>
        </authorList>
    </citation>
    <scope>NUCLEOTIDE SEQUENCE [LARGE SCALE GENOMIC DNA]</scope>
    <source>
        <strain>CMCP6</strain>
    </source>
</reference>
<protein>
    <recommendedName>
        <fullName evidence="1">NADPH-dependent 7-cyano-7-deazaguanine reductase</fullName>
        <ecNumber evidence="1">1.7.1.13</ecNumber>
    </recommendedName>
    <alternativeName>
        <fullName evidence="1">7-cyano-7-carbaguanine reductase</fullName>
    </alternativeName>
    <alternativeName>
        <fullName evidence="1">NADPH-dependent nitrile oxidoreductase</fullName>
    </alternativeName>
    <alternativeName>
        <fullName evidence="1">PreQ(0) reductase</fullName>
    </alternativeName>
</protein>
<feature type="chain" id="PRO_0000163065" description="NADPH-dependent 7-cyano-7-deazaguanine reductase">
    <location>
        <begin position="1"/>
        <end position="281"/>
    </location>
</feature>
<feature type="region of interest" description="Disordered" evidence="2">
    <location>
        <begin position="261"/>
        <end position="281"/>
    </location>
</feature>
<feature type="compositionally biased region" description="Basic and acidic residues" evidence="2">
    <location>
        <begin position="268"/>
        <end position="281"/>
    </location>
</feature>
<feature type="active site" description="Thioimide intermediate" evidence="1">
    <location>
        <position position="188"/>
    </location>
</feature>
<feature type="active site" description="Proton donor" evidence="1">
    <location>
        <position position="195"/>
    </location>
</feature>
<feature type="binding site" evidence="1">
    <location>
        <begin position="87"/>
        <end position="89"/>
    </location>
    <ligand>
        <name>substrate</name>
    </ligand>
</feature>
<feature type="binding site" evidence="1">
    <location>
        <begin position="89"/>
        <end position="90"/>
    </location>
    <ligand>
        <name>NADPH</name>
        <dbReference type="ChEBI" id="CHEBI:57783"/>
    </ligand>
</feature>
<feature type="binding site" evidence="1">
    <location>
        <begin position="227"/>
        <end position="228"/>
    </location>
    <ligand>
        <name>substrate</name>
    </ligand>
</feature>
<feature type="binding site" evidence="1">
    <location>
        <begin position="256"/>
        <end position="257"/>
    </location>
    <ligand>
        <name>NADPH</name>
        <dbReference type="ChEBI" id="CHEBI:57783"/>
    </ligand>
</feature>